<comment type="function">
    <text evidence="2">Terminal nucleotidyltransferase that catalyzes preferentially the transfer of ATP and GTP on RNA 3' poly(A) tail creating a heterogeneous 3' poly(A) tail leading to mRNAs stabilization by protecting mRNAs from active deadenylation (By similarity). Also functions as a catalytic subunit of a TRAMP-like complex which has a poly(A) RNA polymerase activity and is involved in a post-transcriptional quality control mechanism. Polyadenylation with short oligo(A) tails is required for the degradative activity of the exosome on several of its nuclear RNA substrates. Doesn't need a cofactor for polyadenylation activity (in vitro). Plays a role in replication-dependent histone mRNA degradation, probably through terminal uridylation of mature histone mRNAs. May play a role in sister chromatid cohesion (By similarity).</text>
</comment>
<comment type="catalytic activity">
    <reaction evidence="2">
        <text>RNA(n) + ATP = RNA(n)-3'-adenine ribonucleotide + diphosphate</text>
        <dbReference type="Rhea" id="RHEA:11332"/>
        <dbReference type="Rhea" id="RHEA-COMP:14527"/>
        <dbReference type="Rhea" id="RHEA-COMP:17347"/>
        <dbReference type="ChEBI" id="CHEBI:30616"/>
        <dbReference type="ChEBI" id="CHEBI:33019"/>
        <dbReference type="ChEBI" id="CHEBI:140395"/>
        <dbReference type="ChEBI" id="CHEBI:173115"/>
        <dbReference type="EC" id="2.7.7.19"/>
    </reaction>
</comment>
<comment type="cofactor">
    <cofactor evidence="1">
        <name>Mg(2+)</name>
        <dbReference type="ChEBI" id="CHEBI:18420"/>
    </cofactor>
    <cofactor evidence="1">
        <name>Mn(2+)</name>
        <dbReference type="ChEBI" id="CHEBI:29035"/>
    </cofactor>
</comment>
<comment type="subunit">
    <text evidence="2">Component of a nucleolar TRAMP-like complex, an ATP-dependent exosome regulatory complex consisting of a helicase (MTREX), an oligadenylate polymerase (TENT4B or TENT4A), and a substrate specific RNA-binding factor (ZCCHC7 or ZCCHC8). Several TRAMP-like complexes exist with specific compositions and are associated with nuclear, or nucleolar RNA exosomes.</text>
</comment>
<comment type="subcellular location">
    <subcellularLocation>
        <location evidence="2">Nucleus</location>
    </subcellularLocation>
    <subcellularLocation>
        <location evidence="2">Nucleus</location>
        <location evidence="2">Nucleolus</location>
    </subcellularLocation>
    <subcellularLocation>
        <location evidence="2">Cytoplasm</location>
    </subcellularLocation>
    <text evidence="2">Predominantly expressed in the cytoplasm.</text>
</comment>
<comment type="similarity">
    <text evidence="4">Belongs to the DNA polymerase type-B-like family.</text>
</comment>
<comment type="caution">
    <text evidence="4">Was originally thought to have DNA polymerase activity.</text>
</comment>
<comment type="sequence caution" evidence="4">
    <conflict type="erroneous initiation">
        <sequence resource="EMBL-CDS" id="BAC27158"/>
    </conflict>
    <text>Extended N-terminus.</text>
</comment>
<protein>
    <recommendedName>
        <fullName evidence="4">Terminal nucleotidyltransferase 4B</fullName>
    </recommendedName>
    <alternativeName>
        <fullName>Non-canonical poly(A) RNA polymerase PAPD5</fullName>
        <ecNumber evidence="2">2.7.7.19</ecNumber>
    </alternativeName>
    <alternativeName>
        <fullName>PAP-associated domain-containing protein 5</fullName>
    </alternativeName>
    <alternativeName>
        <fullName evidence="4">Terminal guanylyltransferase</fullName>
        <ecNumber evidence="2">2.7.7.-</ecNumber>
    </alternativeName>
    <alternativeName>
        <fullName>Terminal uridylyltransferase 3</fullName>
        <shortName>TUTase 3</shortName>
    </alternativeName>
    <alternativeName>
        <fullName>Topoisomerase-related function protein 4-2</fullName>
        <shortName evidence="2">TRF4-2</shortName>
    </alternativeName>
</protein>
<feature type="chain" id="PRO_0000120311" description="Terminal nucleotidyltransferase 4B">
    <location>
        <begin position="1"/>
        <end position="633"/>
    </location>
</feature>
<feature type="domain" description="PAP-associated">
    <location>
        <begin position="322"/>
        <end position="382"/>
    </location>
</feature>
<feature type="region of interest" description="Disordered" evidence="3">
    <location>
        <begin position="1"/>
        <end position="115"/>
    </location>
</feature>
<feature type="region of interest" description="Disordered" evidence="3">
    <location>
        <begin position="484"/>
        <end position="633"/>
    </location>
</feature>
<feature type="short sequence motif" description="Basic, involved in binding of the RNA primer" evidence="2">
    <location>
        <begin position="618"/>
        <end position="624"/>
    </location>
</feature>
<feature type="compositionally biased region" description="Polar residues" evidence="3">
    <location>
        <begin position="25"/>
        <end position="34"/>
    </location>
</feature>
<feature type="compositionally biased region" description="Low complexity" evidence="3">
    <location>
        <begin position="36"/>
        <end position="52"/>
    </location>
</feature>
<feature type="compositionally biased region" description="Low complexity" evidence="3">
    <location>
        <begin position="60"/>
        <end position="70"/>
    </location>
</feature>
<feature type="compositionally biased region" description="Polar residues" evidence="3">
    <location>
        <begin position="87"/>
        <end position="98"/>
    </location>
</feature>
<feature type="compositionally biased region" description="Gly residues" evidence="3">
    <location>
        <begin position="103"/>
        <end position="115"/>
    </location>
</feature>
<feature type="compositionally biased region" description="Low complexity" evidence="3">
    <location>
        <begin position="492"/>
        <end position="519"/>
    </location>
</feature>
<feature type="compositionally biased region" description="Polar residues" evidence="3">
    <location>
        <begin position="542"/>
        <end position="552"/>
    </location>
</feature>
<feature type="compositionally biased region" description="Polar residues" evidence="3">
    <location>
        <begin position="559"/>
        <end position="614"/>
    </location>
</feature>
<feature type="binding site" evidence="1">
    <location>
        <position position="191"/>
    </location>
    <ligand>
        <name>Mg(2+)</name>
        <dbReference type="ChEBI" id="CHEBI:18420"/>
        <note>catalytic</note>
    </ligand>
</feature>
<feature type="binding site" evidence="1">
    <location>
        <position position="193"/>
    </location>
    <ligand>
        <name>Mg(2+)</name>
        <dbReference type="ChEBI" id="CHEBI:18420"/>
        <note>catalytic</note>
    </ligand>
</feature>
<feature type="binding site" evidence="1">
    <location>
        <position position="254"/>
    </location>
    <ligand>
        <name>ATP</name>
        <dbReference type="ChEBI" id="CHEBI:30616"/>
    </ligand>
</feature>
<feature type="binding site" evidence="1">
    <location>
        <position position="279"/>
    </location>
    <ligand>
        <name>ATP</name>
        <dbReference type="ChEBI" id="CHEBI:30616"/>
    </ligand>
</feature>
<feature type="binding site" evidence="1">
    <location>
        <position position="297"/>
    </location>
    <ligand>
        <name>ATP</name>
        <dbReference type="ChEBI" id="CHEBI:30616"/>
    </ligand>
</feature>
<feature type="binding site" evidence="1">
    <location>
        <position position="298"/>
    </location>
    <ligand>
        <name>ATP</name>
        <dbReference type="ChEBI" id="CHEBI:30616"/>
    </ligand>
</feature>
<feature type="binding site" evidence="1">
    <location>
        <position position="382"/>
    </location>
    <ligand>
        <name>ATP</name>
        <dbReference type="ChEBI" id="CHEBI:30616"/>
    </ligand>
</feature>
<feature type="binding site" evidence="1">
    <location>
        <position position="386"/>
    </location>
    <ligand>
        <name>ATP</name>
        <dbReference type="ChEBI" id="CHEBI:30616"/>
    </ligand>
</feature>
<feature type="modified residue" description="Phosphoserine" evidence="6">
    <location>
        <position position="545"/>
    </location>
</feature>
<feature type="cross-link" description="Glycyl lysine isopeptide (Lys-Gly) (interchain with G-Cter in SUMO2)" evidence="2">
    <location>
        <position position="531"/>
    </location>
</feature>
<feature type="cross-link" description="Glycyl lysine isopeptide (Lys-Gly) (interchain with G-Cter in SUMO2)" evidence="2">
    <location>
        <position position="558"/>
    </location>
</feature>
<feature type="cross-link" description="Glycyl lysine isopeptide (Lys-Gly) (interchain with G-Cter in SUMO2)" evidence="2">
    <location>
        <position position="573"/>
    </location>
</feature>
<feature type="cross-link" description="Glycyl lysine isopeptide (Lys-Gly) (interchain with G-Cter in SUMO2)" evidence="2">
    <location>
        <position position="587"/>
    </location>
</feature>
<feature type="sequence conflict" description="In Ref. 1; BAC27158." evidence="4" ref="1">
    <original>D</original>
    <variation>Y</variation>
    <location>
        <position position="466"/>
    </location>
</feature>
<feature type="sequence conflict" description="In Ref. 1; BAC27158." evidence="4" ref="1">
    <original>N</original>
    <variation>S</variation>
    <location>
        <position position="566"/>
    </location>
</feature>
<proteinExistence type="evidence at protein level"/>
<evidence type="ECO:0000250" key="1">
    <source>
        <dbReference type="UniProtKB" id="O13833"/>
    </source>
</evidence>
<evidence type="ECO:0000250" key="2">
    <source>
        <dbReference type="UniProtKB" id="Q8NDF8"/>
    </source>
</evidence>
<evidence type="ECO:0000256" key="3">
    <source>
        <dbReference type="SAM" id="MobiDB-lite"/>
    </source>
</evidence>
<evidence type="ECO:0000305" key="4"/>
<evidence type="ECO:0000312" key="5">
    <source>
        <dbReference type="MGI" id="MGI:1917820"/>
    </source>
</evidence>
<evidence type="ECO:0007744" key="6">
    <source>
    </source>
</evidence>
<sequence length="633" mass="69704">MFRSGERPLGGLAVPAEQRDFLPLETTNNNNNHHQPAAWARRASAGPSASPVPSAPSSPRPAAALPASESTDPASGSSNKRKRDNKASTYGLNYSLLQPSGGRAAGGGRADGGGGVYSGTPWKRRNYNQGVVGLHEEISDFYEYMSPRPEEEKMRMEVVSRIESVIKELWPSADVQIFGSFKTGLYLPTSDIDLVVFGKWENLPLWTLEEALRKHKVADEDSVKVLDKATVPIIKLTDSFTEVKVDISFNVQNGVRAADLIKDFTKKYPVLPYLVLVLKQFLLQRDLNEVFTGGIGSYSLFLMAVSFLQLHPREDACIPNTNYGVLLIEFFELYGRHFNYLKTGIRIKDGGSYVAKDEVQKNMLDGYRPSMLYIEDPLQPGNDVGRSSYGAMQVKQAFDYAYVVLSHAVSPIAKYYPNNETESILGRIIRVTDEVATYRDWISKQWGLQNRPEPSCNGNGVTLIVDTQQLDKCNNNLSEEKEALGKCRSNASEPLSKHSSNSSSGPVSSSSATQSSSSDVDSDATPCKTPKQLLCRPPTVTRVGSQDVSLEVSQAVGKMQSTQTTNTPNNANKSQHGSARLFRSSSKGFQGTAQTSHGALMTSKQHQGKSNTQYYHGKKRRHKRDAPLSELCR</sequence>
<keyword id="KW-0067">ATP-binding</keyword>
<keyword id="KW-0131">Cell cycle</keyword>
<keyword id="KW-0132">Cell division</keyword>
<keyword id="KW-0963">Cytoplasm</keyword>
<keyword id="KW-0238">DNA-binding</keyword>
<keyword id="KW-0239">DNA-directed DNA polymerase</keyword>
<keyword id="KW-1017">Isopeptide bond</keyword>
<keyword id="KW-0460">Magnesium</keyword>
<keyword id="KW-0464">Manganese</keyword>
<keyword id="KW-0479">Metal-binding</keyword>
<keyword id="KW-0498">Mitosis</keyword>
<keyword id="KW-0507">mRNA processing</keyword>
<keyword id="KW-0547">Nucleotide-binding</keyword>
<keyword id="KW-0548">Nucleotidyltransferase</keyword>
<keyword id="KW-0539">Nucleus</keyword>
<keyword id="KW-0597">Phosphoprotein</keyword>
<keyword id="KW-1185">Reference proteome</keyword>
<keyword id="KW-0698">rRNA processing</keyword>
<keyword id="KW-0808">Transferase</keyword>
<keyword id="KW-0832">Ubl conjugation</keyword>
<organism>
    <name type="scientific">Mus musculus</name>
    <name type="common">Mouse</name>
    <dbReference type="NCBI Taxonomy" id="10090"/>
    <lineage>
        <taxon>Eukaryota</taxon>
        <taxon>Metazoa</taxon>
        <taxon>Chordata</taxon>
        <taxon>Craniata</taxon>
        <taxon>Vertebrata</taxon>
        <taxon>Euteleostomi</taxon>
        <taxon>Mammalia</taxon>
        <taxon>Eutheria</taxon>
        <taxon>Euarchontoglires</taxon>
        <taxon>Glires</taxon>
        <taxon>Rodentia</taxon>
        <taxon>Myomorpha</taxon>
        <taxon>Muroidea</taxon>
        <taxon>Muridae</taxon>
        <taxon>Murinae</taxon>
        <taxon>Mus</taxon>
        <taxon>Mus</taxon>
    </lineage>
</organism>
<accession>Q68ED3</accession>
<accession>A6H635</accession>
<accession>Q8C0K6</accession>
<name>PAPD5_MOUSE</name>
<reference key="1">
    <citation type="journal article" date="2005" name="Science">
        <title>The transcriptional landscape of the mammalian genome.</title>
        <authorList>
            <person name="Carninci P."/>
            <person name="Kasukawa T."/>
            <person name="Katayama S."/>
            <person name="Gough J."/>
            <person name="Frith M.C."/>
            <person name="Maeda N."/>
            <person name="Oyama R."/>
            <person name="Ravasi T."/>
            <person name="Lenhard B."/>
            <person name="Wells C."/>
            <person name="Kodzius R."/>
            <person name="Shimokawa K."/>
            <person name="Bajic V.B."/>
            <person name="Brenner S.E."/>
            <person name="Batalov S."/>
            <person name="Forrest A.R."/>
            <person name="Zavolan M."/>
            <person name="Davis M.J."/>
            <person name="Wilming L.G."/>
            <person name="Aidinis V."/>
            <person name="Allen J.E."/>
            <person name="Ambesi-Impiombato A."/>
            <person name="Apweiler R."/>
            <person name="Aturaliya R.N."/>
            <person name="Bailey T.L."/>
            <person name="Bansal M."/>
            <person name="Baxter L."/>
            <person name="Beisel K.W."/>
            <person name="Bersano T."/>
            <person name="Bono H."/>
            <person name="Chalk A.M."/>
            <person name="Chiu K.P."/>
            <person name="Choudhary V."/>
            <person name="Christoffels A."/>
            <person name="Clutterbuck D.R."/>
            <person name="Crowe M.L."/>
            <person name="Dalla E."/>
            <person name="Dalrymple B.P."/>
            <person name="de Bono B."/>
            <person name="Della Gatta G."/>
            <person name="di Bernardo D."/>
            <person name="Down T."/>
            <person name="Engstrom P."/>
            <person name="Fagiolini M."/>
            <person name="Faulkner G."/>
            <person name="Fletcher C.F."/>
            <person name="Fukushima T."/>
            <person name="Furuno M."/>
            <person name="Futaki S."/>
            <person name="Gariboldi M."/>
            <person name="Georgii-Hemming P."/>
            <person name="Gingeras T.R."/>
            <person name="Gojobori T."/>
            <person name="Green R.E."/>
            <person name="Gustincich S."/>
            <person name="Harbers M."/>
            <person name="Hayashi Y."/>
            <person name="Hensch T.K."/>
            <person name="Hirokawa N."/>
            <person name="Hill D."/>
            <person name="Huminiecki L."/>
            <person name="Iacono M."/>
            <person name="Ikeo K."/>
            <person name="Iwama A."/>
            <person name="Ishikawa T."/>
            <person name="Jakt M."/>
            <person name="Kanapin A."/>
            <person name="Katoh M."/>
            <person name="Kawasawa Y."/>
            <person name="Kelso J."/>
            <person name="Kitamura H."/>
            <person name="Kitano H."/>
            <person name="Kollias G."/>
            <person name="Krishnan S.P."/>
            <person name="Kruger A."/>
            <person name="Kummerfeld S.K."/>
            <person name="Kurochkin I.V."/>
            <person name="Lareau L.F."/>
            <person name="Lazarevic D."/>
            <person name="Lipovich L."/>
            <person name="Liu J."/>
            <person name="Liuni S."/>
            <person name="McWilliam S."/>
            <person name="Madan Babu M."/>
            <person name="Madera M."/>
            <person name="Marchionni L."/>
            <person name="Matsuda H."/>
            <person name="Matsuzawa S."/>
            <person name="Miki H."/>
            <person name="Mignone F."/>
            <person name="Miyake S."/>
            <person name="Morris K."/>
            <person name="Mottagui-Tabar S."/>
            <person name="Mulder N."/>
            <person name="Nakano N."/>
            <person name="Nakauchi H."/>
            <person name="Ng P."/>
            <person name="Nilsson R."/>
            <person name="Nishiguchi S."/>
            <person name="Nishikawa S."/>
            <person name="Nori F."/>
            <person name="Ohara O."/>
            <person name="Okazaki Y."/>
            <person name="Orlando V."/>
            <person name="Pang K.C."/>
            <person name="Pavan W.J."/>
            <person name="Pavesi G."/>
            <person name="Pesole G."/>
            <person name="Petrovsky N."/>
            <person name="Piazza S."/>
            <person name="Reed J."/>
            <person name="Reid J.F."/>
            <person name="Ring B.Z."/>
            <person name="Ringwald M."/>
            <person name="Rost B."/>
            <person name="Ruan Y."/>
            <person name="Salzberg S.L."/>
            <person name="Sandelin A."/>
            <person name="Schneider C."/>
            <person name="Schoenbach C."/>
            <person name="Sekiguchi K."/>
            <person name="Semple C.A."/>
            <person name="Seno S."/>
            <person name="Sessa L."/>
            <person name="Sheng Y."/>
            <person name="Shibata Y."/>
            <person name="Shimada H."/>
            <person name="Shimada K."/>
            <person name="Silva D."/>
            <person name="Sinclair B."/>
            <person name="Sperling S."/>
            <person name="Stupka E."/>
            <person name="Sugiura K."/>
            <person name="Sultana R."/>
            <person name="Takenaka Y."/>
            <person name="Taki K."/>
            <person name="Tammoja K."/>
            <person name="Tan S.L."/>
            <person name="Tang S."/>
            <person name="Taylor M.S."/>
            <person name="Tegner J."/>
            <person name="Teichmann S.A."/>
            <person name="Ueda H.R."/>
            <person name="van Nimwegen E."/>
            <person name="Verardo R."/>
            <person name="Wei C.L."/>
            <person name="Yagi K."/>
            <person name="Yamanishi H."/>
            <person name="Zabarovsky E."/>
            <person name="Zhu S."/>
            <person name="Zimmer A."/>
            <person name="Hide W."/>
            <person name="Bult C."/>
            <person name="Grimmond S.M."/>
            <person name="Teasdale R.D."/>
            <person name="Liu E.T."/>
            <person name="Brusic V."/>
            <person name="Quackenbush J."/>
            <person name="Wahlestedt C."/>
            <person name="Mattick J.S."/>
            <person name="Hume D.A."/>
            <person name="Kai C."/>
            <person name="Sasaki D."/>
            <person name="Tomaru Y."/>
            <person name="Fukuda S."/>
            <person name="Kanamori-Katayama M."/>
            <person name="Suzuki M."/>
            <person name="Aoki J."/>
            <person name="Arakawa T."/>
            <person name="Iida J."/>
            <person name="Imamura K."/>
            <person name="Itoh M."/>
            <person name="Kato T."/>
            <person name="Kawaji H."/>
            <person name="Kawagashira N."/>
            <person name="Kawashima T."/>
            <person name="Kojima M."/>
            <person name="Kondo S."/>
            <person name="Konno H."/>
            <person name="Nakano K."/>
            <person name="Ninomiya N."/>
            <person name="Nishio T."/>
            <person name="Okada M."/>
            <person name="Plessy C."/>
            <person name="Shibata K."/>
            <person name="Shiraki T."/>
            <person name="Suzuki S."/>
            <person name="Tagami M."/>
            <person name="Waki K."/>
            <person name="Watahiki A."/>
            <person name="Okamura-Oho Y."/>
            <person name="Suzuki H."/>
            <person name="Kawai J."/>
            <person name="Hayashizaki Y."/>
        </authorList>
    </citation>
    <scope>NUCLEOTIDE SEQUENCE [LARGE SCALE MRNA]</scope>
    <source>
        <strain>C57BL/6J</strain>
        <tissue>Embryo</tissue>
        <tissue>Thymus</tissue>
    </source>
</reference>
<reference key="2">
    <citation type="journal article" date="2004" name="Genome Res.">
        <title>The status, quality, and expansion of the NIH full-length cDNA project: the Mammalian Gene Collection (MGC).</title>
        <authorList>
            <consortium name="The MGC Project Team"/>
        </authorList>
    </citation>
    <scope>NUCLEOTIDE SEQUENCE [LARGE SCALE MRNA]</scope>
    <source>
        <strain>C57BL/6J</strain>
        <tissue>Brain</tissue>
    </source>
</reference>
<reference key="3">
    <citation type="journal article" date="2007" name="Proc. Natl. Acad. Sci. U.S.A.">
        <title>Large-scale phosphorylation analysis of mouse liver.</title>
        <authorList>
            <person name="Villen J."/>
            <person name="Beausoleil S.A."/>
            <person name="Gerber S.A."/>
            <person name="Gygi S.P."/>
        </authorList>
    </citation>
    <scope>IDENTIFICATION BY MASS SPECTROMETRY [LARGE SCALE ANALYSIS]</scope>
    <source>
        <tissue>Liver</tissue>
    </source>
</reference>
<reference key="4">
    <citation type="journal article" date="2010" name="Cell">
        <title>A tissue-specific atlas of mouse protein phosphorylation and expression.</title>
        <authorList>
            <person name="Huttlin E.L."/>
            <person name="Jedrychowski M.P."/>
            <person name="Elias J.E."/>
            <person name="Goswami T."/>
            <person name="Rad R."/>
            <person name="Beausoleil S.A."/>
            <person name="Villen J."/>
            <person name="Haas W."/>
            <person name="Sowa M.E."/>
            <person name="Gygi S.P."/>
        </authorList>
    </citation>
    <scope>PHOSPHORYLATION [LARGE SCALE ANALYSIS] AT SER-545</scope>
    <scope>IDENTIFICATION BY MASS SPECTROMETRY [LARGE SCALE ANALYSIS]</scope>
    <source>
        <tissue>Pancreas</tissue>
    </source>
</reference>
<gene>
    <name evidence="2" type="primary">Tent4b</name>
    <name evidence="5" type="synonym">Papd5</name>
</gene>
<dbReference type="EC" id="2.7.7.19" evidence="2"/>
<dbReference type="EC" id="2.7.7.-" evidence="2"/>
<dbReference type="EMBL" id="AK030850">
    <property type="protein sequence ID" value="BAC27158.1"/>
    <property type="status" value="ALT_INIT"/>
    <property type="molecule type" value="mRNA"/>
</dbReference>
<dbReference type="EMBL" id="AK077553">
    <property type="status" value="NOT_ANNOTATED_CDS"/>
    <property type="molecule type" value="mRNA"/>
</dbReference>
<dbReference type="EMBL" id="BC080314">
    <property type="protein sequence ID" value="AAH80314.1"/>
    <property type="molecule type" value="mRNA"/>
</dbReference>
<dbReference type="EMBL" id="BC144796">
    <property type="protein sequence ID" value="AAI44797.1"/>
    <property type="molecule type" value="mRNA"/>
</dbReference>
<dbReference type="EMBL" id="BC145737">
    <property type="protein sequence ID" value="AAI45738.1"/>
    <property type="molecule type" value="mRNA"/>
</dbReference>
<dbReference type="RefSeq" id="NP_001157969.1">
    <property type="nucleotide sequence ID" value="NM_001164497.1"/>
</dbReference>
<dbReference type="RefSeq" id="NP_001157970.1">
    <property type="nucleotide sequence ID" value="NM_001164498.1"/>
</dbReference>
<dbReference type="RefSeq" id="NP_001157971.1">
    <property type="nucleotide sequence ID" value="NM_001164499.1"/>
</dbReference>
<dbReference type="RefSeq" id="NP_001401933.1">
    <property type="nucleotide sequence ID" value="NM_001415004.1"/>
</dbReference>
<dbReference type="SMR" id="Q68ED3"/>
<dbReference type="BioGRID" id="229550">
    <property type="interactions" value="2"/>
</dbReference>
<dbReference type="ELM" id="Q68ED3"/>
<dbReference type="FunCoup" id="Q68ED3">
    <property type="interactions" value="1636"/>
</dbReference>
<dbReference type="IntAct" id="Q68ED3">
    <property type="interactions" value="1"/>
</dbReference>
<dbReference type="STRING" id="10090.ENSMUSP00000112766"/>
<dbReference type="GlyGen" id="Q68ED3">
    <property type="glycosylation" value="2 sites, 2 N-linked glycans (2 sites)"/>
</dbReference>
<dbReference type="iPTMnet" id="Q68ED3"/>
<dbReference type="PhosphoSitePlus" id="Q68ED3"/>
<dbReference type="PaxDb" id="10090-ENSMUSP00000112766"/>
<dbReference type="ProteomicsDB" id="288056"/>
<dbReference type="Pumba" id="Q68ED3"/>
<dbReference type="GeneID" id="214627"/>
<dbReference type="KEGG" id="mmu:214627"/>
<dbReference type="AGR" id="MGI:1917820"/>
<dbReference type="CTD" id="64282"/>
<dbReference type="MGI" id="MGI:1917820">
    <property type="gene designation" value="Tent4b"/>
</dbReference>
<dbReference type="eggNOG" id="KOG1906">
    <property type="taxonomic scope" value="Eukaryota"/>
</dbReference>
<dbReference type="InParanoid" id="Q68ED3"/>
<dbReference type="OrthoDB" id="273917at2759"/>
<dbReference type="PhylomeDB" id="Q68ED3"/>
<dbReference type="BRENDA" id="2.7.7.19">
    <property type="organism ID" value="3474"/>
</dbReference>
<dbReference type="BioGRID-ORCS" id="214627">
    <property type="hits" value="18 hits in 79 CRISPR screens"/>
</dbReference>
<dbReference type="ChiTaRS" id="Tent4b">
    <property type="organism name" value="mouse"/>
</dbReference>
<dbReference type="PRO" id="PR:Q68ED3"/>
<dbReference type="Proteomes" id="UP000000589">
    <property type="component" value="Unplaced"/>
</dbReference>
<dbReference type="RNAct" id="Q68ED3">
    <property type="molecule type" value="protein"/>
</dbReference>
<dbReference type="GO" id="GO:0005737">
    <property type="term" value="C:cytoplasm"/>
    <property type="evidence" value="ECO:0000250"/>
    <property type="project" value="UniProtKB"/>
</dbReference>
<dbReference type="GO" id="GO:0005730">
    <property type="term" value="C:nucleolus"/>
    <property type="evidence" value="ECO:0007669"/>
    <property type="project" value="UniProtKB-SubCell"/>
</dbReference>
<dbReference type="GO" id="GO:0005524">
    <property type="term" value="F:ATP binding"/>
    <property type="evidence" value="ECO:0007669"/>
    <property type="project" value="UniProtKB-KW"/>
</dbReference>
<dbReference type="GO" id="GO:0003677">
    <property type="term" value="F:DNA binding"/>
    <property type="evidence" value="ECO:0007669"/>
    <property type="project" value="UniProtKB-KW"/>
</dbReference>
<dbReference type="GO" id="GO:0003887">
    <property type="term" value="F:DNA-directed DNA polymerase activity"/>
    <property type="evidence" value="ECO:0007669"/>
    <property type="project" value="UniProtKB-KW"/>
</dbReference>
<dbReference type="GO" id="GO:0070568">
    <property type="term" value="F:guanylyltransferase activity"/>
    <property type="evidence" value="ECO:0000250"/>
    <property type="project" value="UniProtKB"/>
</dbReference>
<dbReference type="GO" id="GO:0046872">
    <property type="term" value="F:metal ion binding"/>
    <property type="evidence" value="ECO:0007669"/>
    <property type="project" value="UniProtKB-KW"/>
</dbReference>
<dbReference type="GO" id="GO:1990817">
    <property type="term" value="F:poly(A) RNA polymerase activity"/>
    <property type="evidence" value="ECO:0000250"/>
    <property type="project" value="UniProtKB"/>
</dbReference>
<dbReference type="GO" id="GO:0033500">
    <property type="term" value="P:carbohydrate homeostasis"/>
    <property type="evidence" value="ECO:0000250"/>
    <property type="project" value="UniProtKB"/>
</dbReference>
<dbReference type="GO" id="GO:0051301">
    <property type="term" value="P:cell division"/>
    <property type="evidence" value="ECO:0007669"/>
    <property type="project" value="UniProtKB-KW"/>
</dbReference>
<dbReference type="GO" id="GO:0071044">
    <property type="term" value="P:histone mRNA catabolic process"/>
    <property type="evidence" value="ECO:0000250"/>
    <property type="project" value="UniProtKB"/>
</dbReference>
<dbReference type="GO" id="GO:0010587">
    <property type="term" value="P:miRNA catabolic process"/>
    <property type="evidence" value="ECO:0000250"/>
    <property type="project" value="UniProtKB"/>
</dbReference>
<dbReference type="GO" id="GO:0031124">
    <property type="term" value="P:mRNA 3'-end processing"/>
    <property type="evidence" value="ECO:0000250"/>
    <property type="project" value="UniProtKB"/>
</dbReference>
<dbReference type="GO" id="GO:0060212">
    <property type="term" value="P:negative regulation of nuclear-transcribed mRNA poly(A) tail shortening"/>
    <property type="evidence" value="ECO:0000250"/>
    <property type="project" value="UniProtKB"/>
</dbReference>
<dbReference type="GO" id="GO:0071051">
    <property type="term" value="P:poly(A)-dependent snoRNA 3'-end processing"/>
    <property type="evidence" value="ECO:0000250"/>
    <property type="project" value="UniProtKB"/>
</dbReference>
<dbReference type="GO" id="GO:1905870">
    <property type="term" value="P:positive regulation of 3'-UTR-mediated mRNA stabilization"/>
    <property type="evidence" value="ECO:0000250"/>
    <property type="project" value="UniProtKB"/>
</dbReference>
<dbReference type="GO" id="GO:0006364">
    <property type="term" value="P:rRNA processing"/>
    <property type="evidence" value="ECO:0007669"/>
    <property type="project" value="UniProtKB-KW"/>
</dbReference>
<dbReference type="CDD" id="cd05402">
    <property type="entry name" value="NT_PAP_TUTase"/>
    <property type="match status" value="1"/>
</dbReference>
<dbReference type="FunFam" id="3.30.460.10:FF:000006">
    <property type="entry name" value="non-canonical poly(A) RNA polymerase PAPD5"/>
    <property type="match status" value="1"/>
</dbReference>
<dbReference type="FunFam" id="1.10.1410.10:FF:000015">
    <property type="entry name" value="Terminal nucleotidyltransferase 4B"/>
    <property type="match status" value="1"/>
</dbReference>
<dbReference type="Gene3D" id="1.10.1410.10">
    <property type="match status" value="1"/>
</dbReference>
<dbReference type="Gene3D" id="3.30.460.10">
    <property type="entry name" value="Beta Polymerase, domain 2"/>
    <property type="match status" value="1"/>
</dbReference>
<dbReference type="InterPro" id="IPR054708">
    <property type="entry name" value="MTPAP-like_central"/>
</dbReference>
<dbReference type="InterPro" id="IPR043519">
    <property type="entry name" value="NT_sf"/>
</dbReference>
<dbReference type="InterPro" id="IPR002058">
    <property type="entry name" value="PAP_assoc"/>
</dbReference>
<dbReference type="InterPro" id="IPR045862">
    <property type="entry name" value="Trf4-like"/>
</dbReference>
<dbReference type="PANTHER" id="PTHR23092">
    <property type="entry name" value="POLY(A) RNA POLYMERASE"/>
    <property type="match status" value="1"/>
</dbReference>
<dbReference type="PANTHER" id="PTHR23092:SF51">
    <property type="entry name" value="TERMINAL NUCLEOTIDYLTRANSFERASE 4B"/>
    <property type="match status" value="1"/>
</dbReference>
<dbReference type="Pfam" id="PF22600">
    <property type="entry name" value="MTPAP-like_central"/>
    <property type="match status" value="1"/>
</dbReference>
<dbReference type="Pfam" id="PF03828">
    <property type="entry name" value="PAP_assoc"/>
    <property type="match status" value="1"/>
</dbReference>
<dbReference type="SUPFAM" id="SSF81301">
    <property type="entry name" value="Nucleotidyltransferase"/>
    <property type="match status" value="1"/>
</dbReference>
<dbReference type="SUPFAM" id="SSF81631">
    <property type="entry name" value="PAP/OAS1 substrate-binding domain"/>
    <property type="match status" value="1"/>
</dbReference>